<accession>P0DXM0</accession>
<accession>Q77PV3</accession>
<accession>Q9WT45</accession>
<name>UL38_HHV6H</name>
<organismHost>
    <name type="scientific">Homo sapiens</name>
    <name type="common">Human</name>
    <dbReference type="NCBI Taxonomy" id="9606"/>
</organismHost>
<proteinExistence type="evidence at protein level"/>
<keyword id="KW-1035">Host cytoplasm</keyword>
<keyword id="KW-1048">Host nucleus</keyword>
<keyword id="KW-0945">Host-virus interaction</keyword>
<keyword id="KW-1119">Modulation of host cell apoptosis by virus</keyword>
<feature type="chain" id="PRO_0000461145" description="Apoptosis inhibitor U19">
    <location>
        <begin position="1"/>
        <end position="389"/>
    </location>
</feature>
<comment type="function">
    <text evidence="2 3">Plays a role in the inhibition of host apoptosis to facilitate efficient viral replication. Promotes stabilization and inactivation of host TP53 through interaction with host MDM2.</text>
</comment>
<comment type="subunit">
    <text evidence="3">Interacts with host MDM2; this interaction leads to the stabilization of host TP53.</text>
</comment>
<comment type="subcellular location">
    <subcellularLocation>
        <location evidence="1">Host cytoplasm</location>
    </subcellularLocation>
    <subcellularLocation>
        <location evidence="3">Host nucleus</location>
    </subcellularLocation>
    <text evidence="1">localized in the host nucleus at early times postinfection and then increases in both nuclear and cytoplasmic compartments during the course of infection.</text>
</comment>
<comment type="similarity">
    <text>Belongs to the beta-herpesvirinae UL38 protein family.</text>
</comment>
<sequence>MAFTGDELARMLQFKDKMISSAGSALRFEKVVQEAMASGIVLQHITCIKVRICDNSDILSDRQLRCLLINGLYPFEGRMSMFGVTEEWEGASAAPERQVVFLLSSTGQVLGYEDGVIFYLSPTFSDFWTTAMEFSCQNAILSNFIAQKSRDEYSDQFQKYFTRMRHTPISLTGVLPRRFQKVESGACVEEDARASMRPIQSDSFGAKGPFCWPTEELLQPSAKKDVGGTVCMALSCQEDNSARHCTIYGLTKTPGIKIMLSRHTQTDRSEAMCDAATQTEDVVDNSSETLFLGGNLVHQSILETEVQATAKNTFDVSDPRIDSVYDTTVVGAMATDDVGCKHVQGGASLAQEKPLKGYCIIATPSECKPNIHWLKSPENAVHESAAVLR</sequence>
<protein>
    <recommendedName>
        <fullName>Apoptosis inhibitor U19</fullName>
    </recommendedName>
</protein>
<dbReference type="EMBL" id="AB021506">
    <property type="protein sequence ID" value="BAA78240.1"/>
    <property type="molecule type" value="Genomic_DNA"/>
</dbReference>
<dbReference type="PIR" id="T43979">
    <property type="entry name" value="T43979"/>
</dbReference>
<dbReference type="RefSeq" id="NP_050199.1">
    <property type="nucleotide sequence ID" value="NC_000898.1"/>
</dbReference>
<dbReference type="GeneID" id="1497015"/>
<dbReference type="KEGG" id="vg:1497015"/>
<dbReference type="Proteomes" id="UP000142685">
    <property type="component" value="Segment"/>
</dbReference>
<dbReference type="GO" id="GO:0030430">
    <property type="term" value="C:host cell cytoplasm"/>
    <property type="evidence" value="ECO:0007669"/>
    <property type="project" value="UniProtKB-SubCell"/>
</dbReference>
<dbReference type="GO" id="GO:0042025">
    <property type="term" value="C:host cell nucleus"/>
    <property type="evidence" value="ECO:0007669"/>
    <property type="project" value="UniProtKB-SubCell"/>
</dbReference>
<dbReference type="GO" id="GO:0052150">
    <property type="term" value="P:symbiont-mediated perturbation of host apoptosis"/>
    <property type="evidence" value="ECO:0007669"/>
    <property type="project" value="UniProtKB-KW"/>
</dbReference>
<organism>
    <name type="scientific">Human herpesvirus 6B</name>
    <name type="common">HHV-6 variant B</name>
    <name type="synonym">Human B lymphotropic virus</name>
    <dbReference type="NCBI Taxonomy" id="32604"/>
    <lineage>
        <taxon>Viruses</taxon>
        <taxon>Duplodnaviria</taxon>
        <taxon>Heunggongvirae</taxon>
        <taxon>Peploviricota</taxon>
        <taxon>Herviviricetes</taxon>
        <taxon>Herpesvirales</taxon>
        <taxon>Orthoherpesviridae</taxon>
        <taxon>Betaherpesvirinae</taxon>
        <taxon>Roseolovirus</taxon>
        <taxon>Roseolovirus humanbeta6b</taxon>
    </lineage>
</organism>
<reference key="1">
    <citation type="journal article" date="1999" name="J. Virol.">
        <title>Comparison of the complete DNA sequences of human herpesvirus 6 variants A and B.</title>
        <authorList>
            <person name="Isegawa Y."/>
            <person name="Mukai T."/>
            <person name="Nakano K."/>
            <person name="Kagawa M."/>
            <person name="Chen J."/>
            <person name="Mori Y."/>
            <person name="Sunagawa T."/>
            <person name="Kawanishi K."/>
            <person name="Sashihara J."/>
            <person name="Hata A."/>
            <person name="Zou P."/>
            <person name="Kosuge H."/>
            <person name="Yamanishi K."/>
        </authorList>
    </citation>
    <scope>NUCLEOTIDE SEQUENCE [LARGE SCALE GENOMIC DNA]</scope>
    <source>
        <strain>HST</strain>
    </source>
</reference>
<reference key="2">
    <citation type="journal article" date="2013" name="PLoS ONE">
        <title>Inhibition of p53-dependent, but not p53-independent, cell death by U19 protein from human herpesvirus 6B.</title>
        <authorList>
            <person name="Kofod-Olsen E."/>
            <person name="Moller J.M."/>
            <person name="Schleimann M.H."/>
            <person name="Bundgaard B."/>
            <person name="Bak R.O."/>
            <person name="Oster B."/>
            <person name="Mikkelsen J.G."/>
            <person name="Hupp T."/>
            <person name="Hollsberg P."/>
        </authorList>
    </citation>
    <scope>FUNCTION</scope>
</reference>
<reference key="3">
    <citation type="journal article" date="2014" name="Virology">
        <title>Human herpesvirus-6B protein U19 contains a p53 BOX I homology motif for HDM2 binding and p53 stabilization.</title>
        <authorList>
            <person name="Kofod-Olsen E."/>
            <person name="Pettersson S."/>
            <person name="Wallace M."/>
            <person name="Abduljabar A.B."/>
            <person name="Oster B."/>
            <person name="Hupp T."/>
            <person name="Hollsberg P."/>
        </authorList>
    </citation>
    <scope>FUNCTION</scope>
    <scope>INTERACTION WITH HOST MDM2</scope>
    <scope>SUBCELLULAR LOCATION</scope>
</reference>
<evidence type="ECO:0000250" key="1">
    <source>
        <dbReference type="UniProtKB" id="F5HG98"/>
    </source>
</evidence>
<evidence type="ECO:0000269" key="2">
    <source>
    </source>
</evidence>
<evidence type="ECO:0000269" key="3">
    <source>
    </source>
</evidence>
<gene>
    <name type="primary">U19</name>
</gene>